<reference key="1">
    <citation type="journal article" date="2004" name="Nat. Biotechnol.">
        <title>Complete sequence and comparative genome analysis of the dairy bacterium Streptococcus thermophilus.</title>
        <authorList>
            <person name="Bolotin A."/>
            <person name="Quinquis B."/>
            <person name="Renault P."/>
            <person name="Sorokin A."/>
            <person name="Ehrlich S.D."/>
            <person name="Kulakauskas S."/>
            <person name="Lapidus A."/>
            <person name="Goltsman E."/>
            <person name="Mazur M."/>
            <person name="Pusch G.D."/>
            <person name="Fonstein M."/>
            <person name="Overbeek R."/>
            <person name="Kyprides N."/>
            <person name="Purnelle B."/>
            <person name="Prozzi D."/>
            <person name="Ngui K."/>
            <person name="Masuy D."/>
            <person name="Hancy F."/>
            <person name="Burteau S."/>
            <person name="Boutry M."/>
            <person name="Delcour J."/>
            <person name="Goffeau A."/>
            <person name="Hols P."/>
        </authorList>
    </citation>
    <scope>NUCLEOTIDE SEQUENCE [LARGE SCALE GENOMIC DNA]</scope>
    <source>
        <strain>ATCC BAA-250 / LMG 18311</strain>
    </source>
</reference>
<accession>Q5M3I5</accession>
<dbReference type="EC" id="2.7.7.6" evidence="1"/>
<dbReference type="EMBL" id="CP000023">
    <property type="protein sequence ID" value="AAV61043.1"/>
    <property type="molecule type" value="Genomic_DNA"/>
</dbReference>
<dbReference type="RefSeq" id="WP_002951415.1">
    <property type="nucleotide sequence ID" value="NC_006448.1"/>
</dbReference>
<dbReference type="SMR" id="Q5M3I5"/>
<dbReference type="STRING" id="264199.stu1430"/>
<dbReference type="GeneID" id="66899191"/>
<dbReference type="KEGG" id="stl:stu1430"/>
<dbReference type="eggNOG" id="COG1758">
    <property type="taxonomic scope" value="Bacteria"/>
</dbReference>
<dbReference type="HOGENOM" id="CLU_125406_0_0_9"/>
<dbReference type="Proteomes" id="UP000001170">
    <property type="component" value="Chromosome"/>
</dbReference>
<dbReference type="GO" id="GO:0000428">
    <property type="term" value="C:DNA-directed RNA polymerase complex"/>
    <property type="evidence" value="ECO:0007669"/>
    <property type="project" value="UniProtKB-KW"/>
</dbReference>
<dbReference type="GO" id="GO:0003677">
    <property type="term" value="F:DNA binding"/>
    <property type="evidence" value="ECO:0007669"/>
    <property type="project" value="UniProtKB-UniRule"/>
</dbReference>
<dbReference type="GO" id="GO:0003899">
    <property type="term" value="F:DNA-directed RNA polymerase activity"/>
    <property type="evidence" value="ECO:0007669"/>
    <property type="project" value="UniProtKB-UniRule"/>
</dbReference>
<dbReference type="GO" id="GO:0006351">
    <property type="term" value="P:DNA-templated transcription"/>
    <property type="evidence" value="ECO:0007669"/>
    <property type="project" value="UniProtKB-UniRule"/>
</dbReference>
<dbReference type="Gene3D" id="3.90.940.10">
    <property type="match status" value="1"/>
</dbReference>
<dbReference type="HAMAP" id="MF_00366">
    <property type="entry name" value="RNApol_bact_RpoZ"/>
    <property type="match status" value="1"/>
</dbReference>
<dbReference type="InterPro" id="IPR003716">
    <property type="entry name" value="DNA-dir_RNA_pol_omega"/>
</dbReference>
<dbReference type="InterPro" id="IPR006110">
    <property type="entry name" value="Pol_omega/Rpo6/RPB6"/>
</dbReference>
<dbReference type="InterPro" id="IPR036161">
    <property type="entry name" value="RPB6/omega-like_sf"/>
</dbReference>
<dbReference type="NCBIfam" id="TIGR00690">
    <property type="entry name" value="rpoZ"/>
    <property type="match status" value="1"/>
</dbReference>
<dbReference type="PANTHER" id="PTHR34476">
    <property type="entry name" value="DNA-DIRECTED RNA POLYMERASE SUBUNIT OMEGA"/>
    <property type="match status" value="1"/>
</dbReference>
<dbReference type="PANTHER" id="PTHR34476:SF1">
    <property type="entry name" value="DNA-DIRECTED RNA POLYMERASE SUBUNIT OMEGA"/>
    <property type="match status" value="1"/>
</dbReference>
<dbReference type="Pfam" id="PF01192">
    <property type="entry name" value="RNA_pol_Rpb6"/>
    <property type="match status" value="1"/>
</dbReference>
<dbReference type="SMART" id="SM01409">
    <property type="entry name" value="RNA_pol_Rpb6"/>
    <property type="match status" value="1"/>
</dbReference>
<dbReference type="SUPFAM" id="SSF63562">
    <property type="entry name" value="RPB6/omega subunit-like"/>
    <property type="match status" value="1"/>
</dbReference>
<comment type="function">
    <text evidence="1">Promotes RNA polymerase assembly. Latches the N- and C-terminal regions of the beta' subunit thereby facilitating its interaction with the beta and alpha subunits.</text>
</comment>
<comment type="catalytic activity">
    <reaction evidence="1">
        <text>RNA(n) + a ribonucleoside 5'-triphosphate = RNA(n+1) + diphosphate</text>
        <dbReference type="Rhea" id="RHEA:21248"/>
        <dbReference type="Rhea" id="RHEA-COMP:14527"/>
        <dbReference type="Rhea" id="RHEA-COMP:17342"/>
        <dbReference type="ChEBI" id="CHEBI:33019"/>
        <dbReference type="ChEBI" id="CHEBI:61557"/>
        <dbReference type="ChEBI" id="CHEBI:140395"/>
        <dbReference type="EC" id="2.7.7.6"/>
    </reaction>
</comment>
<comment type="subunit">
    <text evidence="1">The RNAP catalytic core consists of 2 alpha, 1 beta, 1 beta' and 1 omega subunit. When a sigma factor is associated with the core the holoenzyme is formed, which can initiate transcription.</text>
</comment>
<comment type="similarity">
    <text evidence="1">Belongs to the RNA polymerase subunit omega family.</text>
</comment>
<proteinExistence type="inferred from homology"/>
<evidence type="ECO:0000255" key="1">
    <source>
        <dbReference type="HAMAP-Rule" id="MF_00366"/>
    </source>
</evidence>
<feature type="chain" id="PRO_0000237513" description="DNA-directed RNA polymerase subunit omega">
    <location>
        <begin position="1"/>
        <end position="104"/>
    </location>
</feature>
<sequence length="104" mass="11776">MMLKPSIDKLLDKVPSRYSLVILQAKRAHELAAGAEPTQEFSSVKYTLQALEEIESGNVIIHPNPEAKRKLARLKVIQARLAAEEEERKIKEQIAKEKEEGDKI</sequence>
<protein>
    <recommendedName>
        <fullName evidence="1">DNA-directed RNA polymerase subunit omega</fullName>
        <shortName evidence="1">RNAP omega subunit</shortName>
        <ecNumber evidence="1">2.7.7.6</ecNumber>
    </recommendedName>
    <alternativeName>
        <fullName evidence="1">RNA polymerase omega subunit</fullName>
    </alternativeName>
    <alternativeName>
        <fullName evidence="1">Transcriptase subunit omega</fullName>
    </alternativeName>
</protein>
<organism>
    <name type="scientific">Streptococcus thermophilus (strain ATCC BAA-250 / LMG 18311)</name>
    <dbReference type="NCBI Taxonomy" id="264199"/>
    <lineage>
        <taxon>Bacteria</taxon>
        <taxon>Bacillati</taxon>
        <taxon>Bacillota</taxon>
        <taxon>Bacilli</taxon>
        <taxon>Lactobacillales</taxon>
        <taxon>Streptococcaceae</taxon>
        <taxon>Streptococcus</taxon>
    </lineage>
</organism>
<gene>
    <name evidence="1" type="primary">rpoZ</name>
    <name type="ordered locus">stu1430</name>
</gene>
<keyword id="KW-0240">DNA-directed RNA polymerase</keyword>
<keyword id="KW-0548">Nucleotidyltransferase</keyword>
<keyword id="KW-1185">Reference proteome</keyword>
<keyword id="KW-0804">Transcription</keyword>
<keyword id="KW-0808">Transferase</keyword>
<name>RPOZ_STRT2</name>